<comment type="function">
    <text evidence="1">Endonuclease that specifically degrades the RNA of RNA-DNA hybrids.</text>
</comment>
<comment type="catalytic activity">
    <reaction>
        <text>Endonucleolytic cleavage to 5'-phosphomonoester.</text>
        <dbReference type="EC" id="3.1.26.4"/>
    </reaction>
</comment>
<comment type="cofactor">
    <cofactor evidence="1">
        <name>Mg(2+)</name>
        <dbReference type="ChEBI" id="CHEBI:18420"/>
    </cofactor>
    <text evidence="1">Binds 1 Mg(2+) ion per subunit. May bind a second metal ion at a regulatory site, or after substrate binding.</text>
</comment>
<comment type="subunit">
    <text evidence="1">Monomer.</text>
</comment>
<comment type="subcellular location">
    <subcellularLocation>
        <location evidence="3">Cytoplasm</location>
    </subcellularLocation>
</comment>
<comment type="similarity">
    <text evidence="3">Belongs to the RNase H family.</text>
</comment>
<sequence length="156" mass="17251">MPDSSTQDKIVMIATDGACKGNPGFGGWGALLRYQGHEKAISGSENPTTNNRMELQAVIEALSCLKKPCQIELSTDSKYVMDGLTRWIHGWQKNGWLTAAKKPVKNADLWKQLLALTRQHDIAWKWVKGHAGHPDNERADQLASDAAIALMQQEKA</sequence>
<evidence type="ECO:0000250" key="1"/>
<evidence type="ECO:0000255" key="2">
    <source>
        <dbReference type="PROSITE-ProRule" id="PRU00408"/>
    </source>
</evidence>
<evidence type="ECO:0000305" key="3"/>
<name>RNH_ZYMMO</name>
<dbReference type="EC" id="3.1.26.4"/>
<dbReference type="EMBL" id="AF086791">
    <property type="protein sequence ID" value="AAC70364.1"/>
    <property type="molecule type" value="Genomic_DNA"/>
</dbReference>
<dbReference type="EMBL" id="AE008692">
    <property type="protein sequence ID" value="AAV90225.1"/>
    <property type="molecule type" value="Genomic_DNA"/>
</dbReference>
<dbReference type="PIR" id="T33725">
    <property type="entry name" value="T33725"/>
</dbReference>
<dbReference type="RefSeq" id="WP_011241355.1">
    <property type="nucleotide sequence ID" value="NZ_CP035711.1"/>
</dbReference>
<dbReference type="SMR" id="O69014"/>
<dbReference type="STRING" id="264203.ZMO1601"/>
<dbReference type="GeneID" id="79905064"/>
<dbReference type="KEGG" id="zmo:ZMO1601"/>
<dbReference type="eggNOG" id="COG0328">
    <property type="taxonomic scope" value="Bacteria"/>
</dbReference>
<dbReference type="HOGENOM" id="CLU_030894_6_0_5"/>
<dbReference type="Proteomes" id="UP000001173">
    <property type="component" value="Chromosome"/>
</dbReference>
<dbReference type="GO" id="GO:0005737">
    <property type="term" value="C:cytoplasm"/>
    <property type="evidence" value="ECO:0007669"/>
    <property type="project" value="UniProtKB-SubCell"/>
</dbReference>
<dbReference type="GO" id="GO:0000287">
    <property type="term" value="F:magnesium ion binding"/>
    <property type="evidence" value="ECO:0007669"/>
    <property type="project" value="UniProtKB-UniRule"/>
</dbReference>
<dbReference type="GO" id="GO:0003676">
    <property type="term" value="F:nucleic acid binding"/>
    <property type="evidence" value="ECO:0007669"/>
    <property type="project" value="InterPro"/>
</dbReference>
<dbReference type="GO" id="GO:0004523">
    <property type="term" value="F:RNA-DNA hybrid ribonuclease activity"/>
    <property type="evidence" value="ECO:0007669"/>
    <property type="project" value="UniProtKB-UniRule"/>
</dbReference>
<dbReference type="GO" id="GO:0043137">
    <property type="term" value="P:DNA replication, removal of RNA primer"/>
    <property type="evidence" value="ECO:0007669"/>
    <property type="project" value="TreeGrafter"/>
</dbReference>
<dbReference type="CDD" id="cd09278">
    <property type="entry name" value="RNase_HI_prokaryote_like"/>
    <property type="match status" value="1"/>
</dbReference>
<dbReference type="FunFam" id="3.30.420.10:FF:000089">
    <property type="entry name" value="Ribonuclease H"/>
    <property type="match status" value="1"/>
</dbReference>
<dbReference type="Gene3D" id="3.30.420.10">
    <property type="entry name" value="Ribonuclease H-like superfamily/Ribonuclease H"/>
    <property type="match status" value="1"/>
</dbReference>
<dbReference type="HAMAP" id="MF_00042">
    <property type="entry name" value="RNase_H"/>
    <property type="match status" value="1"/>
</dbReference>
<dbReference type="InterPro" id="IPR050092">
    <property type="entry name" value="RNase_H"/>
</dbReference>
<dbReference type="InterPro" id="IPR012337">
    <property type="entry name" value="RNaseH-like_sf"/>
</dbReference>
<dbReference type="InterPro" id="IPR002156">
    <property type="entry name" value="RNaseH_domain"/>
</dbReference>
<dbReference type="InterPro" id="IPR036397">
    <property type="entry name" value="RNaseH_sf"/>
</dbReference>
<dbReference type="InterPro" id="IPR022892">
    <property type="entry name" value="RNaseHI"/>
</dbReference>
<dbReference type="NCBIfam" id="NF001236">
    <property type="entry name" value="PRK00203.1"/>
    <property type="match status" value="1"/>
</dbReference>
<dbReference type="PANTHER" id="PTHR10642">
    <property type="entry name" value="RIBONUCLEASE H1"/>
    <property type="match status" value="1"/>
</dbReference>
<dbReference type="PANTHER" id="PTHR10642:SF26">
    <property type="entry name" value="RIBONUCLEASE H1"/>
    <property type="match status" value="1"/>
</dbReference>
<dbReference type="Pfam" id="PF00075">
    <property type="entry name" value="RNase_H"/>
    <property type="match status" value="1"/>
</dbReference>
<dbReference type="SUPFAM" id="SSF53098">
    <property type="entry name" value="Ribonuclease H-like"/>
    <property type="match status" value="1"/>
</dbReference>
<dbReference type="PROSITE" id="PS50879">
    <property type="entry name" value="RNASE_H_1"/>
    <property type="match status" value="1"/>
</dbReference>
<feature type="chain" id="PRO_0000195429" description="Ribonuclease H">
    <location>
        <begin position="1"/>
        <end position="156"/>
    </location>
</feature>
<feature type="domain" description="RNase H type-1" evidence="2">
    <location>
        <begin position="7"/>
        <end position="148"/>
    </location>
</feature>
<feature type="binding site" evidence="1">
    <location>
        <position position="16"/>
    </location>
    <ligand>
        <name>Mg(2+)</name>
        <dbReference type="ChEBI" id="CHEBI:18420"/>
        <label>1</label>
    </ligand>
</feature>
<feature type="binding site" evidence="1">
    <location>
        <position position="16"/>
    </location>
    <ligand>
        <name>Mg(2+)</name>
        <dbReference type="ChEBI" id="CHEBI:18420"/>
        <label>2</label>
    </ligand>
</feature>
<feature type="binding site" evidence="1">
    <location>
        <position position="54"/>
    </location>
    <ligand>
        <name>Mg(2+)</name>
        <dbReference type="ChEBI" id="CHEBI:18420"/>
        <label>1</label>
    </ligand>
</feature>
<feature type="binding site" evidence="1">
    <location>
        <position position="76"/>
    </location>
    <ligand>
        <name>Mg(2+)</name>
        <dbReference type="ChEBI" id="CHEBI:18420"/>
        <label>1</label>
    </ligand>
</feature>
<feature type="binding site" evidence="1">
    <location>
        <position position="140"/>
    </location>
    <ligand>
        <name>Mg(2+)</name>
        <dbReference type="ChEBI" id="CHEBI:18420"/>
        <label>2</label>
    </ligand>
</feature>
<gene>
    <name type="primary">rnhA</name>
    <name type="synonym">rnh</name>
    <name type="ordered locus">ZMO1601</name>
</gene>
<reference key="1">
    <citation type="submission" date="1998-04" db="EMBL/GenBank/DDBJ databases">
        <title>Sequence analysis of a cosmid clone of Zymomonas mobilis ZM4 containing alcohol dehydrogenase B gene.</title>
        <authorList>
            <person name="Lee J."/>
            <person name="Jin S."/>
            <person name="Kang H.S."/>
        </authorList>
    </citation>
    <scope>NUCLEOTIDE SEQUENCE [GENOMIC DNA]</scope>
    <source>
        <strain>ATCC 31821 / ZM4 / CP4</strain>
    </source>
</reference>
<reference key="2">
    <citation type="journal article" date="2005" name="Nat. Biotechnol.">
        <title>The genome sequence of the ethanologenic bacterium Zymomonas mobilis ZM4.</title>
        <authorList>
            <person name="Seo J.-S."/>
            <person name="Chong H."/>
            <person name="Park H.S."/>
            <person name="Yoon K.-O."/>
            <person name="Jung C."/>
            <person name="Kim J.J."/>
            <person name="Hong J.H."/>
            <person name="Kim H."/>
            <person name="Kim J.-H."/>
            <person name="Kil J.-I."/>
            <person name="Park C.J."/>
            <person name="Oh H.-M."/>
            <person name="Lee J.-S."/>
            <person name="Jin S.-J."/>
            <person name="Um H.-W."/>
            <person name="Lee H.-J."/>
            <person name="Oh S.-J."/>
            <person name="Kim J.Y."/>
            <person name="Kang H.L."/>
            <person name="Lee S.Y."/>
            <person name="Lee K.J."/>
            <person name="Kang H.S."/>
        </authorList>
    </citation>
    <scope>NUCLEOTIDE SEQUENCE [LARGE SCALE GENOMIC DNA]</scope>
    <source>
        <strain>ATCC 31821 / ZM4 / CP4</strain>
    </source>
</reference>
<keyword id="KW-0963">Cytoplasm</keyword>
<keyword id="KW-0255">Endonuclease</keyword>
<keyword id="KW-0378">Hydrolase</keyword>
<keyword id="KW-0460">Magnesium</keyword>
<keyword id="KW-0479">Metal-binding</keyword>
<keyword id="KW-0540">Nuclease</keyword>
<keyword id="KW-1185">Reference proteome</keyword>
<protein>
    <recommendedName>
        <fullName>Ribonuclease H</fullName>
        <shortName>RNase H</shortName>
        <ecNumber>3.1.26.4</ecNumber>
    </recommendedName>
</protein>
<proteinExistence type="inferred from homology"/>
<organism>
    <name type="scientific">Zymomonas mobilis subsp. mobilis (strain ATCC 31821 / ZM4 / CP4)</name>
    <dbReference type="NCBI Taxonomy" id="264203"/>
    <lineage>
        <taxon>Bacteria</taxon>
        <taxon>Pseudomonadati</taxon>
        <taxon>Pseudomonadota</taxon>
        <taxon>Alphaproteobacteria</taxon>
        <taxon>Sphingomonadales</taxon>
        <taxon>Zymomonadaceae</taxon>
        <taxon>Zymomonas</taxon>
    </lineage>
</organism>
<accession>O69014</accession>
<accession>Q5NM35</accession>